<organism>
    <name type="scientific">Ignicoccus hospitalis (strain KIN4/I / DSM 18386 / JCM 14125)</name>
    <dbReference type="NCBI Taxonomy" id="453591"/>
    <lineage>
        <taxon>Archaea</taxon>
        <taxon>Thermoproteota</taxon>
        <taxon>Thermoprotei</taxon>
        <taxon>Desulfurococcales</taxon>
        <taxon>Desulfurococcaceae</taxon>
        <taxon>Ignicoccus</taxon>
    </lineage>
</organism>
<proteinExistence type="inferred from homology"/>
<keyword id="KW-0067">ATP-binding</keyword>
<keyword id="KW-0963">Cytoplasm</keyword>
<keyword id="KW-0436">Ligase</keyword>
<keyword id="KW-0460">Magnesium</keyword>
<keyword id="KW-0479">Metal-binding</keyword>
<keyword id="KW-0547">Nucleotide-binding</keyword>
<keyword id="KW-0658">Purine biosynthesis</keyword>
<keyword id="KW-1185">Reference proteome</keyword>
<sequence length="713" mass="77918">MPLTEEELKLIEETLGRKPNQVELAMFEAQWSEHCSYKSSRKHLRKLKMDSPWVVKGGDAAVVDFGSVYVAFRIESHNHPSAVDPYNGAATGVGGIIRDILSSGAKPIALLDDLIFGDLDENLVKWHVKGVVKGISDYGNRVGVPTVGGETWFDPDFTRNPMVSVACVGVCPKDKLINGTPRPGDLIVIAGNYTGKDGLLGSSFASKNLEEGVEEEYAAIQVPDPLMEKLLIDSILEMRDERLLVFVKDLGGGGLATALSEVAASFGLGVEARLDALHLREPMEAWEIVVSESQERMMLVIRPEDLERAKKVLEKYDVPYSVIGKFTDTGRVVLYYNGEKVADLPAKFLAEGPELDRPYERPKWHLELELLPPLPEVDLGDAIRKVLSSPNVASKRWIYEQYDHEVQIRTVVKPGEGDAAVLRLLEDPPKGIAVATDSNPRYTFLDPLWGAADVFLEAYRNVVASGARPLAAVDQVDAGSPERPDRFWFFVRMIDGLAWVEREVDVPIVGGKVSFYNEDDVTGKQIKPTVMITMIGKVENVYNAKRARAEEGDLLVLVGETFPELGGSEFLWSVHKLVRGKPPVPRPSTEARVAERILKAIKVSGVTGVHDVSVGGLAAAVAELAKGFGATLELDKVKGPWKRPEEALFSESGARYLLAVKPEAAEEVLKVTGGTVVGKVGGGPLRVLLNGKEVASVDDFEDLLENGMTSRLV</sequence>
<dbReference type="EC" id="6.3.5.3" evidence="1"/>
<dbReference type="EMBL" id="CP000816">
    <property type="protein sequence ID" value="ABU82428.1"/>
    <property type="molecule type" value="Genomic_DNA"/>
</dbReference>
<dbReference type="RefSeq" id="WP_012123392.1">
    <property type="nucleotide sequence ID" value="NC_009776.1"/>
</dbReference>
<dbReference type="SMR" id="A8ABX6"/>
<dbReference type="STRING" id="453591.Igni_1252"/>
<dbReference type="GeneID" id="5562767"/>
<dbReference type="KEGG" id="iho:Igni_1252"/>
<dbReference type="eggNOG" id="arCOG00641">
    <property type="taxonomic scope" value="Archaea"/>
</dbReference>
<dbReference type="HOGENOM" id="CLU_003100_0_1_2"/>
<dbReference type="OrthoDB" id="8251at2157"/>
<dbReference type="PhylomeDB" id="A8ABX6"/>
<dbReference type="UniPathway" id="UPA00074">
    <property type="reaction ID" value="UER00128"/>
</dbReference>
<dbReference type="Proteomes" id="UP000000262">
    <property type="component" value="Chromosome"/>
</dbReference>
<dbReference type="GO" id="GO:0005737">
    <property type="term" value="C:cytoplasm"/>
    <property type="evidence" value="ECO:0007669"/>
    <property type="project" value="UniProtKB-SubCell"/>
</dbReference>
<dbReference type="GO" id="GO:0005524">
    <property type="term" value="F:ATP binding"/>
    <property type="evidence" value="ECO:0007669"/>
    <property type="project" value="UniProtKB-UniRule"/>
</dbReference>
<dbReference type="GO" id="GO:0000287">
    <property type="term" value="F:magnesium ion binding"/>
    <property type="evidence" value="ECO:0007669"/>
    <property type="project" value="UniProtKB-UniRule"/>
</dbReference>
<dbReference type="GO" id="GO:0004642">
    <property type="term" value="F:phosphoribosylformylglycinamidine synthase activity"/>
    <property type="evidence" value="ECO:0007669"/>
    <property type="project" value="UniProtKB-UniRule"/>
</dbReference>
<dbReference type="GO" id="GO:0006189">
    <property type="term" value="P:'de novo' IMP biosynthetic process"/>
    <property type="evidence" value="ECO:0007669"/>
    <property type="project" value="UniProtKB-UniRule"/>
</dbReference>
<dbReference type="CDD" id="cd02203">
    <property type="entry name" value="PurL_repeat1"/>
    <property type="match status" value="1"/>
</dbReference>
<dbReference type="CDD" id="cd02204">
    <property type="entry name" value="PurL_repeat2"/>
    <property type="match status" value="1"/>
</dbReference>
<dbReference type="Gene3D" id="3.90.650.10">
    <property type="entry name" value="PurM-like C-terminal domain"/>
    <property type="match status" value="2"/>
</dbReference>
<dbReference type="Gene3D" id="3.30.1330.10">
    <property type="entry name" value="PurM-like, N-terminal domain"/>
    <property type="match status" value="2"/>
</dbReference>
<dbReference type="HAMAP" id="MF_00420">
    <property type="entry name" value="PurL_2"/>
    <property type="match status" value="1"/>
</dbReference>
<dbReference type="InterPro" id="IPR010074">
    <property type="entry name" value="PRibForGlyAmidine_synth_PurL"/>
</dbReference>
<dbReference type="InterPro" id="IPR041609">
    <property type="entry name" value="PurL_linker"/>
</dbReference>
<dbReference type="InterPro" id="IPR010918">
    <property type="entry name" value="PurM-like_C_dom"/>
</dbReference>
<dbReference type="InterPro" id="IPR036676">
    <property type="entry name" value="PurM-like_C_sf"/>
</dbReference>
<dbReference type="InterPro" id="IPR016188">
    <property type="entry name" value="PurM-like_N"/>
</dbReference>
<dbReference type="InterPro" id="IPR036921">
    <property type="entry name" value="PurM-like_N_sf"/>
</dbReference>
<dbReference type="NCBIfam" id="TIGR01736">
    <property type="entry name" value="FGAM_synth_II"/>
    <property type="match status" value="1"/>
</dbReference>
<dbReference type="NCBIfam" id="NF002290">
    <property type="entry name" value="PRK01213.1"/>
    <property type="match status" value="1"/>
</dbReference>
<dbReference type="PANTHER" id="PTHR43555">
    <property type="entry name" value="PHOSPHORIBOSYLFORMYLGLYCINAMIDINE SYNTHASE SUBUNIT PURL"/>
    <property type="match status" value="1"/>
</dbReference>
<dbReference type="PANTHER" id="PTHR43555:SF1">
    <property type="entry name" value="PHOSPHORIBOSYLFORMYLGLYCINAMIDINE SYNTHASE SUBUNIT PURL"/>
    <property type="match status" value="1"/>
</dbReference>
<dbReference type="Pfam" id="PF00586">
    <property type="entry name" value="AIRS"/>
    <property type="match status" value="2"/>
</dbReference>
<dbReference type="Pfam" id="PF02769">
    <property type="entry name" value="AIRS_C"/>
    <property type="match status" value="2"/>
</dbReference>
<dbReference type="Pfam" id="PF18072">
    <property type="entry name" value="FGAR-AT_linker"/>
    <property type="match status" value="1"/>
</dbReference>
<dbReference type="PIRSF" id="PIRSF001587">
    <property type="entry name" value="FGAM_synthase_II"/>
    <property type="match status" value="1"/>
</dbReference>
<dbReference type="SUPFAM" id="SSF56042">
    <property type="entry name" value="PurM C-terminal domain-like"/>
    <property type="match status" value="2"/>
</dbReference>
<dbReference type="SUPFAM" id="SSF55326">
    <property type="entry name" value="PurM N-terminal domain-like"/>
    <property type="match status" value="2"/>
</dbReference>
<feature type="chain" id="PRO_1000050311" description="Phosphoribosylformylglycinamidine synthase subunit PurL">
    <location>
        <begin position="1"/>
        <end position="713"/>
    </location>
</feature>
<feature type="active site" evidence="1">
    <location>
        <position position="34"/>
    </location>
</feature>
<feature type="active site" description="Proton acceptor" evidence="1">
    <location>
        <position position="77"/>
    </location>
</feature>
<feature type="binding site" evidence="1">
    <location>
        <position position="37"/>
    </location>
    <ligand>
        <name>ATP</name>
        <dbReference type="ChEBI" id="CHEBI:30616"/>
    </ligand>
</feature>
<feature type="binding site" evidence="1">
    <location>
        <position position="73"/>
    </location>
    <ligand>
        <name>ATP</name>
        <dbReference type="ChEBI" id="CHEBI:30616"/>
    </ligand>
</feature>
<feature type="binding site" evidence="1">
    <location>
        <position position="75"/>
    </location>
    <ligand>
        <name>Mg(2+)</name>
        <dbReference type="ChEBI" id="CHEBI:18420"/>
        <label>1</label>
    </ligand>
</feature>
<feature type="binding site" evidence="1">
    <location>
        <begin position="76"/>
        <end position="79"/>
    </location>
    <ligand>
        <name>substrate</name>
    </ligand>
</feature>
<feature type="binding site" evidence="1">
    <location>
        <position position="98"/>
    </location>
    <ligand>
        <name>substrate</name>
    </ligand>
</feature>
<feature type="binding site" evidence="1">
    <location>
        <position position="99"/>
    </location>
    <ligand>
        <name>Mg(2+)</name>
        <dbReference type="ChEBI" id="CHEBI:18420"/>
        <label>2</label>
    </ligand>
</feature>
<feature type="binding site" evidence="1">
    <location>
        <position position="221"/>
    </location>
    <ligand>
        <name>substrate</name>
    </ligand>
</feature>
<feature type="binding site" evidence="1">
    <location>
        <position position="249"/>
    </location>
    <ligand>
        <name>Mg(2+)</name>
        <dbReference type="ChEBI" id="CHEBI:18420"/>
        <label>2</label>
    </ligand>
</feature>
<feature type="binding site" evidence="1">
    <location>
        <begin position="292"/>
        <end position="294"/>
    </location>
    <ligand>
        <name>substrate</name>
    </ligand>
</feature>
<feature type="binding site" evidence="1">
    <location>
        <position position="474"/>
    </location>
    <ligand>
        <name>ATP</name>
        <dbReference type="ChEBI" id="CHEBI:30616"/>
    </ligand>
</feature>
<feature type="binding site" evidence="1">
    <location>
        <position position="511"/>
    </location>
    <ligand>
        <name>ATP</name>
        <dbReference type="ChEBI" id="CHEBI:30616"/>
    </ligand>
</feature>
<feature type="binding site" evidence="1">
    <location>
        <position position="514"/>
    </location>
    <ligand>
        <name>substrate</name>
    </ligand>
</feature>
<name>PURL_IGNH4</name>
<comment type="function">
    <text evidence="1">Part of the phosphoribosylformylglycinamidine synthase complex involved in the purines biosynthetic pathway. Catalyzes the ATP-dependent conversion of formylglycinamide ribonucleotide (FGAR) and glutamine to yield formylglycinamidine ribonucleotide (FGAM) and glutamate. The FGAM synthase complex is composed of three subunits. PurQ produces an ammonia molecule by converting glutamine to glutamate. PurL transfers the ammonia molecule to FGAR to form FGAM in an ATP-dependent manner. PurS interacts with PurQ and PurL and is thought to assist in the transfer of the ammonia molecule from PurQ to PurL.</text>
</comment>
<comment type="catalytic activity">
    <reaction evidence="1">
        <text>N(2)-formyl-N(1)-(5-phospho-beta-D-ribosyl)glycinamide + L-glutamine + ATP + H2O = 2-formamido-N(1)-(5-O-phospho-beta-D-ribosyl)acetamidine + L-glutamate + ADP + phosphate + H(+)</text>
        <dbReference type="Rhea" id="RHEA:17129"/>
        <dbReference type="ChEBI" id="CHEBI:15377"/>
        <dbReference type="ChEBI" id="CHEBI:15378"/>
        <dbReference type="ChEBI" id="CHEBI:29985"/>
        <dbReference type="ChEBI" id="CHEBI:30616"/>
        <dbReference type="ChEBI" id="CHEBI:43474"/>
        <dbReference type="ChEBI" id="CHEBI:58359"/>
        <dbReference type="ChEBI" id="CHEBI:147286"/>
        <dbReference type="ChEBI" id="CHEBI:147287"/>
        <dbReference type="ChEBI" id="CHEBI:456216"/>
        <dbReference type="EC" id="6.3.5.3"/>
    </reaction>
</comment>
<comment type="pathway">
    <text evidence="1">Purine metabolism; IMP biosynthesis via de novo pathway; 5-amino-1-(5-phospho-D-ribosyl)imidazole from N(2)-formyl-N(1)-(5-phospho-D-ribosyl)glycinamide: step 1/2.</text>
</comment>
<comment type="subunit">
    <text evidence="1">Monomer. Part of the FGAM synthase complex composed of 1 PurL, 1 PurQ and 2 PurS subunits.</text>
</comment>
<comment type="subcellular location">
    <subcellularLocation>
        <location evidence="1">Cytoplasm</location>
    </subcellularLocation>
</comment>
<comment type="similarity">
    <text evidence="1">Belongs to the FGAMS family.</text>
</comment>
<evidence type="ECO:0000255" key="1">
    <source>
        <dbReference type="HAMAP-Rule" id="MF_00420"/>
    </source>
</evidence>
<protein>
    <recommendedName>
        <fullName evidence="1">Phosphoribosylformylglycinamidine synthase subunit PurL</fullName>
        <shortName evidence="1">FGAM synthase</shortName>
        <ecNumber evidence="1">6.3.5.3</ecNumber>
    </recommendedName>
    <alternativeName>
        <fullName evidence="1">Formylglycinamide ribonucleotide amidotransferase subunit II</fullName>
        <shortName evidence="1">FGAR amidotransferase II</shortName>
        <shortName evidence="1">FGAR-AT II</shortName>
    </alternativeName>
    <alternativeName>
        <fullName evidence="1">Glutamine amidotransferase PurL</fullName>
    </alternativeName>
    <alternativeName>
        <fullName evidence="1">Phosphoribosylformylglycinamidine synthase subunit II</fullName>
    </alternativeName>
</protein>
<accession>A8ABX6</accession>
<reference key="1">
    <citation type="journal article" date="2008" name="Genome Biol.">
        <title>A genomic analysis of the archaeal system Ignicoccus hospitalis-Nanoarchaeum equitans.</title>
        <authorList>
            <person name="Podar M."/>
            <person name="Anderson I."/>
            <person name="Makarova K.S."/>
            <person name="Elkins J.G."/>
            <person name="Ivanova N."/>
            <person name="Wall M.A."/>
            <person name="Lykidis A."/>
            <person name="Mavromatis K."/>
            <person name="Sun H."/>
            <person name="Hudson M.E."/>
            <person name="Chen W."/>
            <person name="Deciu C."/>
            <person name="Hutchison D."/>
            <person name="Eads J.R."/>
            <person name="Anderson A."/>
            <person name="Fernandes F."/>
            <person name="Szeto E."/>
            <person name="Lapidus A."/>
            <person name="Kyrpides N.C."/>
            <person name="Saier M.H. Jr."/>
            <person name="Richardson P.M."/>
            <person name="Rachel R."/>
            <person name="Huber H."/>
            <person name="Eisen J.A."/>
            <person name="Koonin E.V."/>
            <person name="Keller M."/>
            <person name="Stetter K.O."/>
        </authorList>
    </citation>
    <scope>NUCLEOTIDE SEQUENCE [LARGE SCALE GENOMIC DNA]</scope>
    <source>
        <strain>KIN4/I / DSM 18386 / JCM 14125</strain>
    </source>
</reference>
<gene>
    <name evidence="1" type="primary">purL</name>
    <name type="ordered locus">Igni_1252</name>
</gene>